<reference key="1">
    <citation type="journal article" date="2007" name="Genome Res.">
        <title>Comparative sequence analyses reveal rapid and divergent evolutionary changes of the WFDC locus in the primate lineage.</title>
        <authorList>
            <consortium name="NISC comparative sequencing program"/>
            <person name="Hurle B."/>
            <person name="Swanson W."/>
            <person name="Green E.D."/>
        </authorList>
    </citation>
    <scope>NUCLEOTIDE SEQUENCE [GENOMIC DNA]</scope>
</reference>
<comment type="function">
    <text evidence="1 3">Potassium channel regulatory subunit that modulate the delayed rectifier voltage-gated potassium channel activity of KCNB1 and KCNB2 by altering their kinetics, expression levels, and shifting the half-inactivation potential to more polarized values. While it does not form functional channels on its own, it can form functional heterotetrameric channels with KCNB1 and KCNB2 (By similarity). Each regulatory subunit has unique regulatory properties that can lead to extensive inhibition, significant changes in kinetics, and/or substantial shifts in the voltage dependencies of the inactivation process (By similarity).</text>
</comment>
<comment type="subunit">
    <text evidence="1 3">Heterotetramer with KCNB1 (By similarity). Heterotetramer with KCNB2 (By similarity). Does not form homomultimers (By similarity).</text>
</comment>
<comment type="subcellular location">
    <subcellularLocation>
        <location evidence="3">Cell membrane</location>
        <topology evidence="3">Multi-pass membrane protein</topology>
    </subcellularLocation>
    <text evidence="3">May not reach the plasma membrane but remain in an intracellular compartment in the absence of KCNB1 or KCNB2.</text>
</comment>
<comment type="domain">
    <text evidence="2">The transmembrane segment S4 functions as a voltage-sensor and is characterized by a series of positively charged amino acids at every third position. Channel opening and closing is effected by a conformation change that affects the position and orientation of the voltage-sensor paddle formed by S3 and S4 within the membrane. A transmembrane electric field that is positive inside would push the positively charged S4 segment outwards, thereby opening the pore, while a field that is negative inside would pull the S4 segment inwards and close the pore. Changes in the position and orientation of S4 are then transmitted to the activation gate formed by the inner helix bundle via the S4-S5 linker region.</text>
</comment>
<comment type="similarity">
    <text evidence="5">Belongs to the potassium channel family. S (TC 1.A.1.2) subfamily. Kv9.1/KCNS1 sub-subfamily.</text>
</comment>
<dbReference type="EMBL" id="DP000037">
    <property type="protein sequence ID" value="ABO52923.1"/>
    <property type="molecule type" value="Genomic_DNA"/>
</dbReference>
<dbReference type="RefSeq" id="NP_001129322.1">
    <property type="nucleotide sequence ID" value="NM_001135850.1"/>
</dbReference>
<dbReference type="RefSeq" id="XP_009435499.1">
    <property type="nucleotide sequence ID" value="XM_009437224.4"/>
</dbReference>
<dbReference type="SMR" id="A4K2N8"/>
<dbReference type="FunCoup" id="A4K2N8">
    <property type="interactions" value="32"/>
</dbReference>
<dbReference type="STRING" id="9598.ENSPTRP00000023246"/>
<dbReference type="PaxDb" id="9598-ENSPTRP00000023246"/>
<dbReference type="Ensembl" id="ENSPTRT00000025188.4">
    <property type="protein sequence ID" value="ENSPTRP00000023246.3"/>
    <property type="gene ID" value="ENSPTRG00000013534.6"/>
</dbReference>
<dbReference type="GeneID" id="469951"/>
<dbReference type="KEGG" id="ptr:469951"/>
<dbReference type="CTD" id="3787"/>
<dbReference type="VGNC" id="VGNC:9876">
    <property type="gene designation" value="KCNS1"/>
</dbReference>
<dbReference type="eggNOG" id="KOG3713">
    <property type="taxonomic scope" value="Eukaryota"/>
</dbReference>
<dbReference type="GeneTree" id="ENSGT00940000160096"/>
<dbReference type="HOGENOM" id="CLU_011722_4_1_1"/>
<dbReference type="InParanoid" id="A4K2N8"/>
<dbReference type="OMA" id="CSGRYHE"/>
<dbReference type="TreeFam" id="TF313103"/>
<dbReference type="Proteomes" id="UP000002277">
    <property type="component" value="Chromosome 20"/>
</dbReference>
<dbReference type="Bgee" id="ENSPTRG00000013534">
    <property type="expression patterns" value="Expressed in primary visual cortex and 12 other cell types or tissues"/>
</dbReference>
<dbReference type="GO" id="GO:0016020">
    <property type="term" value="C:membrane"/>
    <property type="evidence" value="ECO:0000318"/>
    <property type="project" value="GO_Central"/>
</dbReference>
<dbReference type="GO" id="GO:0005654">
    <property type="term" value="C:nucleoplasm"/>
    <property type="evidence" value="ECO:0007669"/>
    <property type="project" value="Ensembl"/>
</dbReference>
<dbReference type="GO" id="GO:0048471">
    <property type="term" value="C:perinuclear region of cytoplasm"/>
    <property type="evidence" value="ECO:0000250"/>
    <property type="project" value="UniProtKB"/>
</dbReference>
<dbReference type="GO" id="GO:0005886">
    <property type="term" value="C:plasma membrane"/>
    <property type="evidence" value="ECO:0000250"/>
    <property type="project" value="UniProtKB"/>
</dbReference>
<dbReference type="GO" id="GO:0008076">
    <property type="term" value="C:voltage-gated potassium channel complex"/>
    <property type="evidence" value="ECO:0000250"/>
    <property type="project" value="UniProtKB"/>
</dbReference>
<dbReference type="GO" id="GO:0015459">
    <property type="term" value="F:potassium channel regulator activity"/>
    <property type="evidence" value="ECO:0000250"/>
    <property type="project" value="UniProtKB"/>
</dbReference>
<dbReference type="GO" id="GO:0005249">
    <property type="term" value="F:voltage-gated potassium channel activity"/>
    <property type="evidence" value="ECO:0007669"/>
    <property type="project" value="InterPro"/>
</dbReference>
<dbReference type="GO" id="GO:0001508">
    <property type="term" value="P:action potential"/>
    <property type="evidence" value="ECO:0000318"/>
    <property type="project" value="GO_Central"/>
</dbReference>
<dbReference type="GO" id="GO:0071805">
    <property type="term" value="P:potassium ion transmembrane transport"/>
    <property type="evidence" value="ECO:0000318"/>
    <property type="project" value="GO_Central"/>
</dbReference>
<dbReference type="GO" id="GO:0006813">
    <property type="term" value="P:potassium ion transport"/>
    <property type="evidence" value="ECO:0000250"/>
    <property type="project" value="UniProtKB"/>
</dbReference>
<dbReference type="GO" id="GO:0051260">
    <property type="term" value="P:protein homooligomerization"/>
    <property type="evidence" value="ECO:0007669"/>
    <property type="project" value="InterPro"/>
</dbReference>
<dbReference type="GO" id="GO:1901379">
    <property type="term" value="P:regulation of potassium ion transmembrane transport"/>
    <property type="evidence" value="ECO:0000250"/>
    <property type="project" value="UniProtKB"/>
</dbReference>
<dbReference type="FunFam" id="1.10.287.70:FF:000005">
    <property type="entry name" value="potassium voltage-gated channel subfamily G member 1"/>
    <property type="match status" value="1"/>
</dbReference>
<dbReference type="FunFam" id="3.30.710.10:FF:000102">
    <property type="entry name" value="Potassium voltage-gated channel subfamily S member 1"/>
    <property type="match status" value="1"/>
</dbReference>
<dbReference type="FunFam" id="1.20.120.350:FF:000029">
    <property type="entry name" value="Potassium voltage-gated channel subfamily S member 2"/>
    <property type="match status" value="1"/>
</dbReference>
<dbReference type="Gene3D" id="1.10.287.70">
    <property type="match status" value="1"/>
</dbReference>
<dbReference type="Gene3D" id="3.30.710.10">
    <property type="entry name" value="Potassium Channel Kv1.1, Chain A"/>
    <property type="match status" value="1"/>
</dbReference>
<dbReference type="Gene3D" id="1.20.120.350">
    <property type="entry name" value="Voltage-gated potassium channels. Chain C"/>
    <property type="match status" value="1"/>
</dbReference>
<dbReference type="InterPro" id="IPR000210">
    <property type="entry name" value="BTB/POZ_dom"/>
</dbReference>
<dbReference type="InterPro" id="IPR005821">
    <property type="entry name" value="Ion_trans_dom"/>
</dbReference>
<dbReference type="InterPro" id="IPR003968">
    <property type="entry name" value="K_chnl_volt-dep_Kv"/>
</dbReference>
<dbReference type="InterPro" id="IPR003971">
    <property type="entry name" value="K_chnl_volt-dep_Kv5/Kv9"/>
</dbReference>
<dbReference type="InterPro" id="IPR011333">
    <property type="entry name" value="SKP1/BTB/POZ_sf"/>
</dbReference>
<dbReference type="InterPro" id="IPR003131">
    <property type="entry name" value="T1-type_BTB"/>
</dbReference>
<dbReference type="InterPro" id="IPR028325">
    <property type="entry name" value="VG_K_chnl"/>
</dbReference>
<dbReference type="InterPro" id="IPR027359">
    <property type="entry name" value="Volt_channel_dom_sf"/>
</dbReference>
<dbReference type="PANTHER" id="PTHR11537:SF61">
    <property type="entry name" value="POTASSIUM VOLTAGE-GATED CHANNEL SUBFAMILY S MEMBER 1"/>
    <property type="match status" value="1"/>
</dbReference>
<dbReference type="PANTHER" id="PTHR11537">
    <property type="entry name" value="VOLTAGE-GATED POTASSIUM CHANNEL"/>
    <property type="match status" value="1"/>
</dbReference>
<dbReference type="Pfam" id="PF02214">
    <property type="entry name" value="BTB_2"/>
    <property type="match status" value="1"/>
</dbReference>
<dbReference type="Pfam" id="PF00520">
    <property type="entry name" value="Ion_trans"/>
    <property type="match status" value="1"/>
</dbReference>
<dbReference type="PRINTS" id="PR00169">
    <property type="entry name" value="KCHANNEL"/>
</dbReference>
<dbReference type="PRINTS" id="PR01494">
    <property type="entry name" value="KV9CHANNEL"/>
</dbReference>
<dbReference type="PRINTS" id="PR01491">
    <property type="entry name" value="KVCHANNEL"/>
</dbReference>
<dbReference type="SMART" id="SM00225">
    <property type="entry name" value="BTB"/>
    <property type="match status" value="1"/>
</dbReference>
<dbReference type="SUPFAM" id="SSF54695">
    <property type="entry name" value="POZ domain"/>
    <property type="match status" value="1"/>
</dbReference>
<dbReference type="SUPFAM" id="SSF81324">
    <property type="entry name" value="Voltage-gated potassium channels"/>
    <property type="match status" value="1"/>
</dbReference>
<evidence type="ECO:0000250" key="1">
    <source>
        <dbReference type="UniProtKB" id="O35173"/>
    </source>
</evidence>
<evidence type="ECO:0000250" key="2">
    <source>
        <dbReference type="UniProtKB" id="P63142"/>
    </source>
</evidence>
<evidence type="ECO:0000250" key="3">
    <source>
        <dbReference type="UniProtKB" id="Q96KK3"/>
    </source>
</evidence>
<evidence type="ECO:0000256" key="4">
    <source>
        <dbReference type="SAM" id="MobiDB-lite"/>
    </source>
</evidence>
<evidence type="ECO:0000305" key="5"/>
<organism>
    <name type="scientific">Pan troglodytes</name>
    <name type="common">Chimpanzee</name>
    <dbReference type="NCBI Taxonomy" id="9598"/>
    <lineage>
        <taxon>Eukaryota</taxon>
        <taxon>Metazoa</taxon>
        <taxon>Chordata</taxon>
        <taxon>Craniata</taxon>
        <taxon>Vertebrata</taxon>
        <taxon>Euteleostomi</taxon>
        <taxon>Mammalia</taxon>
        <taxon>Eutheria</taxon>
        <taxon>Euarchontoglires</taxon>
        <taxon>Primates</taxon>
        <taxon>Haplorrhini</taxon>
        <taxon>Catarrhini</taxon>
        <taxon>Hominidae</taxon>
        <taxon>Pan</taxon>
    </lineage>
</organism>
<sequence length="526" mass="58414">MLMLLVRGTHYENLRSKVVLPTPLGGRSTETFVSEFPGPDTGIRWRRSDEALRVNVGGVRRQLSARALARFPGTRLGRLQAAASEEQARRLCDDYDEAAREFYFDRHPGFFLSLLHFYRTGHLHVLDELCVFAFGQEADYWGLGENALAACCRARYLERRLTQPHAWDEDSDTPSSVDPCPDEISDVQRELARYGAARCGRLRRRLWLTMENPGYSLPSKLFSCVSISVVLASIAAMCIHSLPEYQAREAAAAVAAVAAGRSPEGVRDDPVLRRLEYFCIAWFSFEVSSRLLLAPSTRNFFCHPLNLIDIVSVLPFYLTLLAGVALGDQGGKEFGHLGKVVQVFRLMRIFRVLKLARHSTGLRSLGATLKHSYREVGILLLYLAVGVSVFSGVAYTAEKEEDVGFNTIPACWWWGTVSMTTVGYGDVVPVTVAGKLAASGCILGGILVVALPITIIFNKFSHFYRRQKALEAAVRNSNHREFEDLLSSVDGVSEASLETSRETSQEGRSADLESQAPSEPPHPQMY</sequence>
<gene>
    <name evidence="3" type="primary">KCNS1</name>
</gene>
<proteinExistence type="inferred from homology"/>
<protein>
    <recommendedName>
        <fullName evidence="3">Delayed-rectifier potassium channel regulatory subunit KCNS1</fullName>
    </recommendedName>
    <alternativeName>
        <fullName>Delayed-rectifier K(+) channel alpha subunit 1</fullName>
    </alternativeName>
    <alternativeName>
        <fullName evidence="3">Delayed-rectifier potassium channel subunit Kv9.1</fullName>
    </alternativeName>
</protein>
<accession>A4K2N8</accession>
<keyword id="KW-1003">Cell membrane</keyword>
<keyword id="KW-0407">Ion channel</keyword>
<keyword id="KW-0406">Ion transport</keyword>
<keyword id="KW-0472">Membrane</keyword>
<keyword id="KW-0630">Potassium</keyword>
<keyword id="KW-0631">Potassium channel</keyword>
<keyword id="KW-0633">Potassium transport</keyword>
<keyword id="KW-1185">Reference proteome</keyword>
<keyword id="KW-0812">Transmembrane</keyword>
<keyword id="KW-1133">Transmembrane helix</keyword>
<keyword id="KW-0813">Transport</keyword>
<keyword id="KW-0851">Voltage-gated channel</keyword>
<feature type="chain" id="PRO_0000289620" description="Delayed-rectifier potassium channel regulatory subunit KCNS1">
    <location>
        <begin position="1"/>
        <end position="526"/>
    </location>
</feature>
<feature type="topological domain" description="Cytoplasmic" evidence="2">
    <location>
        <begin position="1"/>
        <end position="217"/>
    </location>
</feature>
<feature type="transmembrane region" description="Helical; Name=Segment S1" evidence="2">
    <location>
        <begin position="218"/>
        <end position="239"/>
    </location>
</feature>
<feature type="topological domain" description="Extracellular" evidence="2">
    <location>
        <begin position="240"/>
        <end position="270"/>
    </location>
</feature>
<feature type="transmembrane region" description="Helical; Name=Segment S2" evidence="2">
    <location>
        <begin position="271"/>
        <end position="293"/>
    </location>
</feature>
<feature type="topological domain" description="Cytoplasmic" evidence="2">
    <location>
        <begin position="294"/>
        <end position="304"/>
    </location>
</feature>
<feature type="transmembrane region" description="Helical; Name=Segment S3" evidence="2">
    <location>
        <begin position="305"/>
        <end position="322"/>
    </location>
</feature>
<feature type="topological domain" description="Extracellular" evidence="2">
    <location>
        <begin position="323"/>
        <end position="337"/>
    </location>
</feature>
<feature type="transmembrane region" description="Helical; Voltage-sensor; Name=Segment S4" evidence="2">
    <location>
        <begin position="338"/>
        <end position="358"/>
    </location>
</feature>
<feature type="topological domain" description="Cytoplasmic" evidence="2">
    <location>
        <begin position="359"/>
        <end position="373"/>
    </location>
</feature>
<feature type="transmembrane region" description="Helical; Name=Segment S5" evidence="2">
    <location>
        <begin position="374"/>
        <end position="395"/>
    </location>
</feature>
<feature type="topological domain" description="Extracellular" evidence="2">
    <location>
        <begin position="396"/>
        <end position="408"/>
    </location>
</feature>
<feature type="intramembrane region" description="Helical; Name=Pore helix" evidence="2">
    <location>
        <begin position="409"/>
        <end position="420"/>
    </location>
</feature>
<feature type="intramembrane region" evidence="2">
    <location>
        <begin position="421"/>
        <end position="428"/>
    </location>
</feature>
<feature type="topological domain" description="Extracellular" evidence="2">
    <location>
        <begin position="429"/>
        <end position="435"/>
    </location>
</feature>
<feature type="transmembrane region" description="Helical; Name=Segment S6" evidence="2">
    <location>
        <begin position="436"/>
        <end position="464"/>
    </location>
</feature>
<feature type="topological domain" description="Cytoplasmic" evidence="2">
    <location>
        <begin position="465"/>
        <end position="526"/>
    </location>
</feature>
<feature type="region of interest" description="Disordered" evidence="4">
    <location>
        <begin position="491"/>
        <end position="526"/>
    </location>
</feature>
<feature type="short sequence motif" description="Selectivity filter" evidence="2">
    <location>
        <begin position="421"/>
        <end position="426"/>
    </location>
</feature>
<feature type="compositionally biased region" description="Basic and acidic residues" evidence="4">
    <location>
        <begin position="499"/>
        <end position="511"/>
    </location>
</feature>
<name>KCNS1_PANTR</name>